<keyword id="KW-0997">Cell inner membrane</keyword>
<keyword id="KW-1003">Cell membrane</keyword>
<keyword id="KW-0169">Cobalamin biosynthesis</keyword>
<keyword id="KW-0460">Magnesium</keyword>
<keyword id="KW-0472">Membrane</keyword>
<keyword id="KW-0808">Transferase</keyword>
<keyword id="KW-0812">Transmembrane</keyword>
<keyword id="KW-1133">Transmembrane helix</keyword>
<feature type="chain" id="PRO_1000045799" description="Adenosylcobinamide-GDP ribazoletransferase">
    <location>
        <begin position="1"/>
        <end position="247"/>
    </location>
</feature>
<feature type="transmembrane region" description="Helical" evidence="1">
    <location>
        <begin position="34"/>
        <end position="54"/>
    </location>
</feature>
<feature type="transmembrane region" description="Helical" evidence="1">
    <location>
        <begin position="59"/>
        <end position="79"/>
    </location>
</feature>
<feature type="transmembrane region" description="Helical" evidence="1">
    <location>
        <begin position="113"/>
        <end position="133"/>
    </location>
</feature>
<feature type="transmembrane region" description="Helical" evidence="1">
    <location>
        <begin position="138"/>
        <end position="158"/>
    </location>
</feature>
<feature type="transmembrane region" description="Helical" evidence="1">
    <location>
        <begin position="187"/>
        <end position="207"/>
    </location>
</feature>
<organism>
    <name type="scientific">Salmonella choleraesuis (strain SC-B67)</name>
    <dbReference type="NCBI Taxonomy" id="321314"/>
    <lineage>
        <taxon>Bacteria</taxon>
        <taxon>Pseudomonadati</taxon>
        <taxon>Pseudomonadota</taxon>
        <taxon>Gammaproteobacteria</taxon>
        <taxon>Enterobacterales</taxon>
        <taxon>Enterobacteriaceae</taxon>
        <taxon>Salmonella</taxon>
    </lineage>
</organism>
<dbReference type="EC" id="2.7.8.26" evidence="1"/>
<dbReference type="EMBL" id="AE017220">
    <property type="protein sequence ID" value="AAX65931.1"/>
    <property type="molecule type" value="Genomic_DNA"/>
</dbReference>
<dbReference type="RefSeq" id="WP_000040005.1">
    <property type="nucleotide sequence ID" value="NC_006905.1"/>
</dbReference>
<dbReference type="KEGG" id="sec:SCH_2025"/>
<dbReference type="HOGENOM" id="CLU_057426_3_1_6"/>
<dbReference type="UniPathway" id="UPA00148">
    <property type="reaction ID" value="UER00238"/>
</dbReference>
<dbReference type="Proteomes" id="UP000000538">
    <property type="component" value="Chromosome"/>
</dbReference>
<dbReference type="GO" id="GO:0005886">
    <property type="term" value="C:plasma membrane"/>
    <property type="evidence" value="ECO:0007669"/>
    <property type="project" value="UniProtKB-SubCell"/>
</dbReference>
<dbReference type="GO" id="GO:0051073">
    <property type="term" value="F:adenosylcobinamide-GDP ribazoletransferase activity"/>
    <property type="evidence" value="ECO:0007669"/>
    <property type="project" value="UniProtKB-UniRule"/>
</dbReference>
<dbReference type="GO" id="GO:0008818">
    <property type="term" value="F:cobalamin 5'-phosphate synthase activity"/>
    <property type="evidence" value="ECO:0007669"/>
    <property type="project" value="UniProtKB-UniRule"/>
</dbReference>
<dbReference type="GO" id="GO:0009236">
    <property type="term" value="P:cobalamin biosynthetic process"/>
    <property type="evidence" value="ECO:0007669"/>
    <property type="project" value="UniProtKB-UniRule"/>
</dbReference>
<dbReference type="HAMAP" id="MF_00719">
    <property type="entry name" value="CobS"/>
    <property type="match status" value="1"/>
</dbReference>
<dbReference type="InterPro" id="IPR003805">
    <property type="entry name" value="CobS"/>
</dbReference>
<dbReference type="NCBIfam" id="TIGR00317">
    <property type="entry name" value="cobS"/>
    <property type="match status" value="1"/>
</dbReference>
<dbReference type="PANTHER" id="PTHR34148">
    <property type="entry name" value="ADENOSYLCOBINAMIDE-GDP RIBAZOLETRANSFERASE"/>
    <property type="match status" value="1"/>
</dbReference>
<dbReference type="PANTHER" id="PTHR34148:SF1">
    <property type="entry name" value="ADENOSYLCOBINAMIDE-GDP RIBAZOLETRANSFERASE"/>
    <property type="match status" value="1"/>
</dbReference>
<dbReference type="Pfam" id="PF02654">
    <property type="entry name" value="CobS"/>
    <property type="match status" value="1"/>
</dbReference>
<name>COBS_SALCH</name>
<comment type="function">
    <text evidence="1">Joins adenosylcobinamide-GDP and alpha-ribazole to generate adenosylcobalamin (Ado-cobalamin). Also synthesizes adenosylcobalamin 5'-phosphate from adenosylcobinamide-GDP and alpha-ribazole 5'-phosphate.</text>
</comment>
<comment type="catalytic activity">
    <reaction evidence="1">
        <text>alpha-ribazole + adenosylcob(III)inamide-GDP = adenosylcob(III)alamin + GMP + H(+)</text>
        <dbReference type="Rhea" id="RHEA:16049"/>
        <dbReference type="ChEBI" id="CHEBI:10329"/>
        <dbReference type="ChEBI" id="CHEBI:15378"/>
        <dbReference type="ChEBI" id="CHEBI:18408"/>
        <dbReference type="ChEBI" id="CHEBI:58115"/>
        <dbReference type="ChEBI" id="CHEBI:60487"/>
        <dbReference type="EC" id="2.7.8.26"/>
    </reaction>
</comment>
<comment type="catalytic activity">
    <reaction evidence="1">
        <text>alpha-ribazole 5'-phosphate + adenosylcob(III)inamide-GDP = adenosylcob(III)alamin 5'-phosphate + GMP + H(+)</text>
        <dbReference type="Rhea" id="RHEA:23560"/>
        <dbReference type="ChEBI" id="CHEBI:15378"/>
        <dbReference type="ChEBI" id="CHEBI:57918"/>
        <dbReference type="ChEBI" id="CHEBI:58115"/>
        <dbReference type="ChEBI" id="CHEBI:60487"/>
        <dbReference type="ChEBI" id="CHEBI:60493"/>
        <dbReference type="EC" id="2.7.8.26"/>
    </reaction>
</comment>
<comment type="cofactor">
    <cofactor evidence="1">
        <name>Mg(2+)</name>
        <dbReference type="ChEBI" id="CHEBI:18420"/>
    </cofactor>
</comment>
<comment type="pathway">
    <text evidence="1">Cofactor biosynthesis; adenosylcobalamin biosynthesis; adenosylcobalamin from cob(II)yrinate a,c-diamide: step 7/7.</text>
</comment>
<comment type="subcellular location">
    <subcellularLocation>
        <location evidence="1">Cell inner membrane</location>
        <topology evidence="1">Multi-pass membrane protein</topology>
    </subcellularLocation>
</comment>
<comment type="similarity">
    <text evidence="1">Belongs to the CobS family.</text>
</comment>
<reference key="1">
    <citation type="journal article" date="2005" name="Nucleic Acids Res.">
        <title>The genome sequence of Salmonella enterica serovar Choleraesuis, a highly invasive and resistant zoonotic pathogen.</title>
        <authorList>
            <person name="Chiu C.-H."/>
            <person name="Tang P."/>
            <person name="Chu C."/>
            <person name="Hu S."/>
            <person name="Bao Q."/>
            <person name="Yu J."/>
            <person name="Chou Y.-Y."/>
            <person name="Wang H.-S."/>
            <person name="Lee Y.-S."/>
        </authorList>
    </citation>
    <scope>NUCLEOTIDE SEQUENCE [LARGE SCALE GENOMIC DNA]</scope>
    <source>
        <strain>SC-B67</strain>
    </source>
</reference>
<evidence type="ECO:0000255" key="1">
    <source>
        <dbReference type="HAMAP-Rule" id="MF_00719"/>
    </source>
</evidence>
<protein>
    <recommendedName>
        <fullName evidence="1">Adenosylcobinamide-GDP ribazoletransferase</fullName>
        <ecNumber evidence="1">2.7.8.26</ecNumber>
    </recommendedName>
    <alternativeName>
        <fullName evidence="1">Cobalamin synthase</fullName>
    </alternativeName>
    <alternativeName>
        <fullName evidence="1">Cobalamin-5'-phosphate synthase</fullName>
    </alternativeName>
</protein>
<accession>Q57MY0</accession>
<proteinExistence type="inferred from homology"/>
<sequence>MSKLFWAMLAFISRLPVPSRWSQGLDFEQYSRGIVMFPFIGLILGGVSGLIFILLQSWCGIPLAALFCILALALLTGGFHLDGLADTCDGIFSARRRERMLEIMRDSRLGTHGGLALIFVLLTKILVVSELALRGTPMLAALAAACAAGRGSAVLLMYRHRYAREEGLGNVFIGKVSGRQTCITLGLAVIVATVLLPGMQGLAAMVVTCAAIFILGQLLKRTLGGQTGDTLGAAIELGELIFLLALL</sequence>
<gene>
    <name evidence="1" type="primary">cobS</name>
    <name type="ordered locus">SCH_2025</name>
</gene>